<protein>
    <recommendedName>
        <fullName evidence="1">UPF0060 membrane protein YnfA</fullName>
    </recommendedName>
</protein>
<reference key="1">
    <citation type="journal article" date="2009" name="J. Bacteriol.">
        <title>Complete genome sequence and comparative genome analysis of enteropathogenic Escherichia coli O127:H6 strain E2348/69.</title>
        <authorList>
            <person name="Iguchi A."/>
            <person name="Thomson N.R."/>
            <person name="Ogura Y."/>
            <person name="Saunders D."/>
            <person name="Ooka T."/>
            <person name="Henderson I.R."/>
            <person name="Harris D."/>
            <person name="Asadulghani M."/>
            <person name="Kurokawa K."/>
            <person name="Dean P."/>
            <person name="Kenny B."/>
            <person name="Quail M.A."/>
            <person name="Thurston S."/>
            <person name="Dougan G."/>
            <person name="Hayashi T."/>
            <person name="Parkhill J."/>
            <person name="Frankel G."/>
        </authorList>
    </citation>
    <scope>NUCLEOTIDE SEQUENCE [LARGE SCALE GENOMIC DNA]</scope>
    <source>
        <strain>E2348/69 / EPEC</strain>
    </source>
</reference>
<keyword id="KW-0997">Cell inner membrane</keyword>
<keyword id="KW-1003">Cell membrane</keyword>
<keyword id="KW-0472">Membrane</keyword>
<keyword id="KW-1185">Reference proteome</keyword>
<keyword id="KW-0812">Transmembrane</keyword>
<keyword id="KW-1133">Transmembrane helix</keyword>
<name>YNFA_ECO27</name>
<proteinExistence type="inferred from homology"/>
<gene>
    <name evidence="1" type="primary">ynfA</name>
    <name type="ordered locus">E2348C_1666</name>
</gene>
<accession>B7URS1</accession>
<sequence>MIKTTLLFFATALCEIIGCFLPWLWLKRNASIWLLLPAGISLALFVWLLTLHPAASGRVYAAYGGVYVCTALIWLRVVDGVKLTLYDWTGALIALCGMLIIVAGWGRT</sequence>
<feature type="chain" id="PRO_1000197488" description="UPF0060 membrane protein YnfA">
    <location>
        <begin position="1"/>
        <end position="108"/>
    </location>
</feature>
<feature type="topological domain" description="Periplasmic" evidence="1">
    <location>
        <begin position="1"/>
        <end position="5"/>
    </location>
</feature>
<feature type="transmembrane region" description="Helical" evidence="1">
    <location>
        <begin position="6"/>
        <end position="26"/>
    </location>
</feature>
<feature type="topological domain" description="Cytoplasmic" evidence="1">
    <location>
        <begin position="27"/>
        <end position="30"/>
    </location>
</feature>
<feature type="transmembrane region" description="Helical" evidence="1">
    <location>
        <begin position="31"/>
        <end position="51"/>
    </location>
</feature>
<feature type="topological domain" description="Periplasmic" evidence="1">
    <location>
        <begin position="52"/>
        <end position="60"/>
    </location>
</feature>
<feature type="transmembrane region" description="Helical" evidence="1">
    <location>
        <begin position="61"/>
        <end position="81"/>
    </location>
</feature>
<feature type="topological domain" description="Cytoplasmic" evidence="1">
    <location>
        <begin position="82"/>
        <end position="84"/>
    </location>
</feature>
<feature type="transmembrane region" description="Helical" evidence="1">
    <location>
        <begin position="85"/>
        <end position="105"/>
    </location>
</feature>
<feature type="topological domain" description="Periplasmic" evidence="1">
    <location>
        <begin position="106"/>
        <end position="108"/>
    </location>
</feature>
<comment type="subcellular location">
    <subcellularLocation>
        <location evidence="1">Cell inner membrane</location>
        <topology evidence="1">Multi-pass membrane protein</topology>
    </subcellularLocation>
</comment>
<comment type="similarity">
    <text evidence="1">Belongs to the UPF0060 family.</text>
</comment>
<dbReference type="EMBL" id="FM180568">
    <property type="protein sequence ID" value="CAS09214.1"/>
    <property type="molecule type" value="Genomic_DNA"/>
</dbReference>
<dbReference type="RefSeq" id="WP_001304355.1">
    <property type="nucleotide sequence ID" value="NC_011601.1"/>
</dbReference>
<dbReference type="SMR" id="B7URS1"/>
<dbReference type="KEGG" id="ecg:E2348C_1666"/>
<dbReference type="HOGENOM" id="CLU_117653_2_1_6"/>
<dbReference type="Proteomes" id="UP000008205">
    <property type="component" value="Chromosome"/>
</dbReference>
<dbReference type="GO" id="GO:0005886">
    <property type="term" value="C:plasma membrane"/>
    <property type="evidence" value="ECO:0007669"/>
    <property type="project" value="UniProtKB-SubCell"/>
</dbReference>
<dbReference type="HAMAP" id="MF_00010">
    <property type="entry name" value="UPF0060"/>
    <property type="match status" value="1"/>
</dbReference>
<dbReference type="InterPro" id="IPR003844">
    <property type="entry name" value="UPF0060"/>
</dbReference>
<dbReference type="NCBIfam" id="NF002586">
    <property type="entry name" value="PRK02237.1"/>
    <property type="match status" value="1"/>
</dbReference>
<dbReference type="PANTHER" id="PTHR36116">
    <property type="entry name" value="UPF0060 MEMBRANE PROTEIN YNFA"/>
    <property type="match status" value="1"/>
</dbReference>
<dbReference type="PANTHER" id="PTHR36116:SF1">
    <property type="entry name" value="UPF0060 MEMBRANE PROTEIN YNFA"/>
    <property type="match status" value="1"/>
</dbReference>
<dbReference type="Pfam" id="PF02694">
    <property type="entry name" value="UPF0060"/>
    <property type="match status" value="1"/>
</dbReference>
<dbReference type="SUPFAM" id="SSF103481">
    <property type="entry name" value="Multidrug resistance efflux transporter EmrE"/>
    <property type="match status" value="1"/>
</dbReference>
<evidence type="ECO:0000255" key="1">
    <source>
        <dbReference type="HAMAP-Rule" id="MF_00010"/>
    </source>
</evidence>
<organism>
    <name type="scientific">Escherichia coli O127:H6 (strain E2348/69 / EPEC)</name>
    <dbReference type="NCBI Taxonomy" id="574521"/>
    <lineage>
        <taxon>Bacteria</taxon>
        <taxon>Pseudomonadati</taxon>
        <taxon>Pseudomonadota</taxon>
        <taxon>Gammaproteobacteria</taxon>
        <taxon>Enterobacterales</taxon>
        <taxon>Enterobacteriaceae</taxon>
        <taxon>Escherichia</taxon>
    </lineage>
</organism>